<evidence type="ECO:0000255" key="1">
    <source>
        <dbReference type="HAMAP-Rule" id="MF_00053"/>
    </source>
</evidence>
<evidence type="ECO:0000255" key="2">
    <source>
        <dbReference type="PROSITE-ProRule" id="PRU01319"/>
    </source>
</evidence>
<protein>
    <recommendedName>
        <fullName evidence="1">Ribonuclease HIII</fullName>
        <shortName evidence="1">RNase HIII</shortName>
        <ecNumber evidence="1">3.1.26.4</ecNumber>
    </recommendedName>
</protein>
<feature type="chain" id="PRO_0000111704" description="Ribonuclease HIII">
    <location>
        <begin position="1"/>
        <end position="300"/>
    </location>
</feature>
<feature type="domain" description="RNase H type-2" evidence="2">
    <location>
        <begin position="83"/>
        <end position="300"/>
    </location>
</feature>
<feature type="binding site" evidence="1">
    <location>
        <position position="89"/>
    </location>
    <ligand>
        <name>a divalent metal cation</name>
        <dbReference type="ChEBI" id="CHEBI:60240"/>
    </ligand>
</feature>
<feature type="binding site" evidence="1">
    <location>
        <position position="90"/>
    </location>
    <ligand>
        <name>a divalent metal cation</name>
        <dbReference type="ChEBI" id="CHEBI:60240"/>
    </ligand>
</feature>
<feature type="binding site" evidence="1">
    <location>
        <position position="194"/>
    </location>
    <ligand>
        <name>a divalent metal cation</name>
        <dbReference type="ChEBI" id="CHEBI:60240"/>
    </ligand>
</feature>
<reference key="1">
    <citation type="journal article" date="2002" name="Proc. Natl. Acad. Sci. U.S.A.">
        <title>Genome sequence of a serotype M3 strain of group A Streptococcus: phage-encoded toxins, the high-virulence phenotype, and clone emergence.</title>
        <authorList>
            <person name="Beres S.B."/>
            <person name="Sylva G.L."/>
            <person name="Barbian K.D."/>
            <person name="Lei B."/>
            <person name="Hoff J.S."/>
            <person name="Mammarella N.D."/>
            <person name="Liu M.-Y."/>
            <person name="Smoot J.C."/>
            <person name="Porcella S.F."/>
            <person name="Parkins L.D."/>
            <person name="Campbell D.S."/>
            <person name="Smith T.M."/>
            <person name="McCormick J.K."/>
            <person name="Leung D.Y.M."/>
            <person name="Schlievert P.M."/>
            <person name="Musser J.M."/>
        </authorList>
    </citation>
    <scope>NUCLEOTIDE SEQUENCE [LARGE SCALE GENOMIC DNA]</scope>
    <source>
        <strain>ATCC BAA-595 / MGAS315</strain>
    </source>
</reference>
<comment type="function">
    <text evidence="1">Endonuclease that specifically degrades the RNA of RNA-DNA hybrids.</text>
</comment>
<comment type="catalytic activity">
    <reaction evidence="1">
        <text>Endonucleolytic cleavage to 5'-phosphomonoester.</text>
        <dbReference type="EC" id="3.1.26.4"/>
    </reaction>
</comment>
<comment type="cofactor">
    <cofactor evidence="1">
        <name>Mn(2+)</name>
        <dbReference type="ChEBI" id="CHEBI:29035"/>
    </cofactor>
    <cofactor evidence="1">
        <name>Mg(2+)</name>
        <dbReference type="ChEBI" id="CHEBI:18420"/>
    </cofactor>
    <text evidence="1">Manganese or magnesium. Binds 1 divalent metal ion per monomer in the absence of substrate. May bind a second metal ion after substrate binding.</text>
</comment>
<comment type="subcellular location">
    <subcellularLocation>
        <location evidence="1">Cytoplasm</location>
    </subcellularLocation>
</comment>
<comment type="similarity">
    <text evidence="1">Belongs to the RNase HII family. RnhC subfamily.</text>
</comment>
<accession>P0DF18</accession>
<accession>Q8K5Y5</accession>
<gene>
    <name evidence="1" type="primary">rnhC</name>
    <name type="ordered locus">SpyM3_1591</name>
</gene>
<sequence>MNTLVLKIDAILSKHLKKQLAPYTISSQNTYVAFAAKKNGVTVLLYKSGKLVLQGNGANALAQELNLPVAKTVFEASNNSQDIPIIGSDEVGNGSYFGGIAVVASFVDPKDHSFLKKLGVDDSKKLSDKTIQQIAPLLEKQIPHQSLLLSPKKYNELVGKSKPYNAISIKVALHNQAIFLLLQKGIQPKQIVIDAFTSQSNYEKHLKKEKNHFPDPLTFQEKAESHYLAVAVSSIIARNLFLDNLDQLGQDLGYQLPSGAGSASDKVASQLLAAYGMSSLEYSAKLHFANTHKAQALLTK</sequence>
<proteinExistence type="inferred from homology"/>
<name>RNH3_STRP3</name>
<keyword id="KW-0963">Cytoplasm</keyword>
<keyword id="KW-0255">Endonuclease</keyword>
<keyword id="KW-0378">Hydrolase</keyword>
<keyword id="KW-0460">Magnesium</keyword>
<keyword id="KW-0479">Metal-binding</keyword>
<keyword id="KW-0540">Nuclease</keyword>
<organism>
    <name type="scientific">Streptococcus pyogenes serotype M3 (strain ATCC BAA-595 / MGAS315)</name>
    <dbReference type="NCBI Taxonomy" id="198466"/>
    <lineage>
        <taxon>Bacteria</taxon>
        <taxon>Bacillati</taxon>
        <taxon>Bacillota</taxon>
        <taxon>Bacilli</taxon>
        <taxon>Lactobacillales</taxon>
        <taxon>Streptococcaceae</taxon>
        <taxon>Streptococcus</taxon>
    </lineage>
</organism>
<dbReference type="EC" id="3.1.26.4" evidence="1"/>
<dbReference type="EMBL" id="AE014074">
    <property type="protein sequence ID" value="AAM80198.1"/>
    <property type="molecule type" value="Genomic_DNA"/>
</dbReference>
<dbReference type="RefSeq" id="WP_011054971.1">
    <property type="nucleotide sequence ID" value="NC_004070.1"/>
</dbReference>
<dbReference type="SMR" id="P0DF18"/>
<dbReference type="KEGG" id="spg:SpyM3_1591"/>
<dbReference type="HOGENOM" id="CLU_059546_1_0_9"/>
<dbReference type="Proteomes" id="UP000000564">
    <property type="component" value="Chromosome"/>
</dbReference>
<dbReference type="GO" id="GO:0005737">
    <property type="term" value="C:cytoplasm"/>
    <property type="evidence" value="ECO:0007669"/>
    <property type="project" value="UniProtKB-SubCell"/>
</dbReference>
<dbReference type="GO" id="GO:0032299">
    <property type="term" value="C:ribonuclease H2 complex"/>
    <property type="evidence" value="ECO:0007669"/>
    <property type="project" value="TreeGrafter"/>
</dbReference>
<dbReference type="GO" id="GO:0000287">
    <property type="term" value="F:magnesium ion binding"/>
    <property type="evidence" value="ECO:0007669"/>
    <property type="project" value="UniProtKB-UniRule"/>
</dbReference>
<dbReference type="GO" id="GO:0003723">
    <property type="term" value="F:RNA binding"/>
    <property type="evidence" value="ECO:0007669"/>
    <property type="project" value="InterPro"/>
</dbReference>
<dbReference type="GO" id="GO:0004523">
    <property type="term" value="F:RNA-DNA hybrid ribonuclease activity"/>
    <property type="evidence" value="ECO:0007669"/>
    <property type="project" value="UniProtKB-UniRule"/>
</dbReference>
<dbReference type="GO" id="GO:0043137">
    <property type="term" value="P:DNA replication, removal of RNA primer"/>
    <property type="evidence" value="ECO:0007669"/>
    <property type="project" value="TreeGrafter"/>
</dbReference>
<dbReference type="GO" id="GO:0006298">
    <property type="term" value="P:mismatch repair"/>
    <property type="evidence" value="ECO:0007669"/>
    <property type="project" value="TreeGrafter"/>
</dbReference>
<dbReference type="CDD" id="cd06590">
    <property type="entry name" value="RNase_HII_bacteria_HIII_like"/>
    <property type="match status" value="1"/>
</dbReference>
<dbReference type="CDD" id="cd14796">
    <property type="entry name" value="RNAse_HIII_N"/>
    <property type="match status" value="1"/>
</dbReference>
<dbReference type="FunFam" id="3.30.420.10:FF:000047">
    <property type="entry name" value="Ribonuclease HIII"/>
    <property type="match status" value="1"/>
</dbReference>
<dbReference type="Gene3D" id="3.30.420.10">
    <property type="entry name" value="Ribonuclease H-like superfamily/Ribonuclease H"/>
    <property type="match status" value="1"/>
</dbReference>
<dbReference type="Gene3D" id="3.30.310.10">
    <property type="entry name" value="TATA-Binding Protein"/>
    <property type="match status" value="1"/>
</dbReference>
<dbReference type="HAMAP" id="MF_00053">
    <property type="entry name" value="RNase_HIII"/>
    <property type="match status" value="1"/>
</dbReference>
<dbReference type="InterPro" id="IPR001352">
    <property type="entry name" value="RNase_HII/HIII"/>
</dbReference>
<dbReference type="InterPro" id="IPR024567">
    <property type="entry name" value="RNase_HII/HIII_dom"/>
</dbReference>
<dbReference type="InterPro" id="IPR004641">
    <property type="entry name" value="RNase_HIII"/>
</dbReference>
<dbReference type="InterPro" id="IPR024568">
    <property type="entry name" value="RNase_HIII_N"/>
</dbReference>
<dbReference type="InterPro" id="IPR012337">
    <property type="entry name" value="RNaseH-like_sf"/>
</dbReference>
<dbReference type="InterPro" id="IPR036397">
    <property type="entry name" value="RNaseH_sf"/>
</dbReference>
<dbReference type="InterPro" id="IPR012295">
    <property type="entry name" value="TBP_dom_sf"/>
</dbReference>
<dbReference type="NCBIfam" id="TIGR00716">
    <property type="entry name" value="rnhC"/>
    <property type="match status" value="1"/>
</dbReference>
<dbReference type="PANTHER" id="PTHR10954:SF23">
    <property type="entry name" value="RIBONUCLEASE"/>
    <property type="match status" value="1"/>
</dbReference>
<dbReference type="PANTHER" id="PTHR10954">
    <property type="entry name" value="RIBONUCLEASE H2 SUBUNIT A"/>
    <property type="match status" value="1"/>
</dbReference>
<dbReference type="Pfam" id="PF11858">
    <property type="entry name" value="DUF3378"/>
    <property type="match status" value="1"/>
</dbReference>
<dbReference type="Pfam" id="PF01351">
    <property type="entry name" value="RNase_HII"/>
    <property type="match status" value="1"/>
</dbReference>
<dbReference type="PIRSF" id="PIRSF037748">
    <property type="entry name" value="RnhC"/>
    <property type="match status" value="1"/>
</dbReference>
<dbReference type="SUPFAM" id="SSF53098">
    <property type="entry name" value="Ribonuclease H-like"/>
    <property type="match status" value="1"/>
</dbReference>
<dbReference type="PROSITE" id="PS51975">
    <property type="entry name" value="RNASE_H_2"/>
    <property type="match status" value="1"/>
</dbReference>